<dbReference type="EC" id="2.3.1.16" evidence="7"/>
<dbReference type="EC" id="2.3.1.155" evidence="7"/>
<dbReference type="EC" id="2.3.1.9" evidence="7"/>
<dbReference type="EMBL" id="M32801">
    <property type="protein sequence ID" value="AAA41471.1"/>
    <property type="molecule type" value="mRNA"/>
</dbReference>
<dbReference type="EMBL" id="D90058">
    <property type="protein sequence ID" value="BAA14106.1"/>
    <property type="molecule type" value="Genomic_DNA"/>
</dbReference>
<dbReference type="EMBL" id="BC089821">
    <property type="protein sequence ID" value="AAH89821.1"/>
    <property type="molecule type" value="mRNA"/>
</dbReference>
<dbReference type="PIR" id="A35725">
    <property type="entry name" value="XURTAA"/>
</dbReference>
<dbReference type="RefSeq" id="NP_036621.1">
    <property type="nucleotide sequence ID" value="NM_012489.2"/>
</dbReference>
<dbReference type="SMR" id="P21775"/>
<dbReference type="FunCoup" id="P21775">
    <property type="interactions" value="1564"/>
</dbReference>
<dbReference type="STRING" id="10116.ENSRNOP00000050691"/>
<dbReference type="PhosphoSitePlus" id="P21775"/>
<dbReference type="jPOST" id="P21775"/>
<dbReference type="PaxDb" id="10116-ENSRNOP00000050691"/>
<dbReference type="PeptideAtlas" id="P21775"/>
<dbReference type="GeneID" id="24157"/>
<dbReference type="KEGG" id="rno:24157"/>
<dbReference type="AGR" id="RGD:67379"/>
<dbReference type="CTD" id="113868"/>
<dbReference type="RGD" id="67379">
    <property type="gene designation" value="Acaa1a"/>
</dbReference>
<dbReference type="eggNOG" id="KOG1389">
    <property type="taxonomic scope" value="Eukaryota"/>
</dbReference>
<dbReference type="InParanoid" id="P21775"/>
<dbReference type="PhylomeDB" id="P21775"/>
<dbReference type="SABIO-RK" id="P21775"/>
<dbReference type="UniPathway" id="UPA00661"/>
<dbReference type="PRO" id="PR:P21775"/>
<dbReference type="Proteomes" id="UP000002494">
    <property type="component" value="Unplaced"/>
</dbReference>
<dbReference type="GO" id="GO:0005829">
    <property type="term" value="C:cytosol"/>
    <property type="evidence" value="ECO:0000304"/>
    <property type="project" value="Reactome"/>
</dbReference>
<dbReference type="GO" id="GO:0005777">
    <property type="term" value="C:peroxisome"/>
    <property type="evidence" value="ECO:0000314"/>
    <property type="project" value="UniProtKB"/>
</dbReference>
<dbReference type="GO" id="GO:0008775">
    <property type="term" value="F:acetate CoA-transferase activity"/>
    <property type="evidence" value="ECO:0000266"/>
    <property type="project" value="RGD"/>
</dbReference>
<dbReference type="GO" id="GO:0003985">
    <property type="term" value="F:acetyl-CoA C-acetyltransferase activity"/>
    <property type="evidence" value="ECO:0007669"/>
    <property type="project" value="UniProtKB-EC"/>
</dbReference>
<dbReference type="GO" id="GO:0003988">
    <property type="term" value="F:acetyl-CoA C-acyltransferase activity"/>
    <property type="evidence" value="ECO:0000314"/>
    <property type="project" value="UniProtKB"/>
</dbReference>
<dbReference type="GO" id="GO:0050633">
    <property type="term" value="F:acetyl-CoA C-myristoyltransferase activity"/>
    <property type="evidence" value="ECO:0000314"/>
    <property type="project" value="UniProtKB"/>
</dbReference>
<dbReference type="GO" id="GO:0016401">
    <property type="term" value="F:palmitoyl-CoA oxidase activity"/>
    <property type="evidence" value="ECO:0000316"/>
    <property type="project" value="UniProtKB"/>
</dbReference>
<dbReference type="GO" id="GO:0008206">
    <property type="term" value="P:bile acid metabolic process"/>
    <property type="evidence" value="ECO:0000314"/>
    <property type="project" value="UniProtKB"/>
</dbReference>
<dbReference type="GO" id="GO:0006635">
    <property type="term" value="P:fatty acid beta-oxidation"/>
    <property type="evidence" value="ECO:0000314"/>
    <property type="project" value="UniProtKB"/>
</dbReference>
<dbReference type="GO" id="GO:0033540">
    <property type="term" value="P:fatty acid beta-oxidation using acyl-CoA oxidase"/>
    <property type="evidence" value="ECO:0007669"/>
    <property type="project" value="UniProtKB-UniPathway"/>
</dbReference>
<dbReference type="GO" id="GO:0010124">
    <property type="term" value="P:phenylacetate catabolic process"/>
    <property type="evidence" value="ECO:0000318"/>
    <property type="project" value="GO_Central"/>
</dbReference>
<dbReference type="GO" id="GO:0007584">
    <property type="term" value="P:response to nutrient"/>
    <property type="evidence" value="ECO:0000314"/>
    <property type="project" value="RGD"/>
</dbReference>
<dbReference type="GO" id="GO:0048545">
    <property type="term" value="P:response to steroid hormone"/>
    <property type="evidence" value="ECO:0000314"/>
    <property type="project" value="RGD"/>
</dbReference>
<dbReference type="GO" id="GO:0009410">
    <property type="term" value="P:response to xenobiotic stimulus"/>
    <property type="evidence" value="ECO:0000270"/>
    <property type="project" value="RGD"/>
</dbReference>
<dbReference type="GO" id="GO:0000038">
    <property type="term" value="P:very long-chain fatty acid metabolic process"/>
    <property type="evidence" value="ECO:0000266"/>
    <property type="project" value="RGD"/>
</dbReference>
<dbReference type="CDD" id="cd00751">
    <property type="entry name" value="thiolase"/>
    <property type="match status" value="1"/>
</dbReference>
<dbReference type="FunFam" id="3.40.47.10:FF:000035">
    <property type="entry name" value="3-ketoacyl-CoA thiolase A, peroxisomal"/>
    <property type="match status" value="1"/>
</dbReference>
<dbReference type="Gene3D" id="3.40.47.10">
    <property type="match status" value="1"/>
</dbReference>
<dbReference type="InterPro" id="IPR002155">
    <property type="entry name" value="Thiolase"/>
</dbReference>
<dbReference type="InterPro" id="IPR016039">
    <property type="entry name" value="Thiolase-like"/>
</dbReference>
<dbReference type="InterPro" id="IPR050215">
    <property type="entry name" value="Thiolase-like_sf_Thiolase"/>
</dbReference>
<dbReference type="InterPro" id="IPR020615">
    <property type="entry name" value="Thiolase_acyl_enz_int_AS"/>
</dbReference>
<dbReference type="InterPro" id="IPR020610">
    <property type="entry name" value="Thiolase_AS"/>
</dbReference>
<dbReference type="InterPro" id="IPR020617">
    <property type="entry name" value="Thiolase_C"/>
</dbReference>
<dbReference type="InterPro" id="IPR020613">
    <property type="entry name" value="Thiolase_CS"/>
</dbReference>
<dbReference type="InterPro" id="IPR020616">
    <property type="entry name" value="Thiolase_N"/>
</dbReference>
<dbReference type="NCBIfam" id="TIGR01930">
    <property type="entry name" value="AcCoA-C-Actrans"/>
    <property type="match status" value="1"/>
</dbReference>
<dbReference type="PANTHER" id="PTHR43853:SF19">
    <property type="entry name" value="3-KETOACYL-COA THIOLASE A, PEROXISOMAL"/>
    <property type="match status" value="1"/>
</dbReference>
<dbReference type="PANTHER" id="PTHR43853">
    <property type="entry name" value="3-KETOACYL-COA THIOLASE, PEROXISOMAL"/>
    <property type="match status" value="1"/>
</dbReference>
<dbReference type="Pfam" id="PF02803">
    <property type="entry name" value="Thiolase_C"/>
    <property type="match status" value="1"/>
</dbReference>
<dbReference type="Pfam" id="PF00108">
    <property type="entry name" value="Thiolase_N"/>
    <property type="match status" value="1"/>
</dbReference>
<dbReference type="PIRSF" id="PIRSF000429">
    <property type="entry name" value="Ac-CoA_Ac_transf"/>
    <property type="match status" value="1"/>
</dbReference>
<dbReference type="SUPFAM" id="SSF53901">
    <property type="entry name" value="Thiolase-like"/>
    <property type="match status" value="2"/>
</dbReference>
<dbReference type="PROSITE" id="PS00098">
    <property type="entry name" value="THIOLASE_1"/>
    <property type="match status" value="1"/>
</dbReference>
<dbReference type="PROSITE" id="PS00737">
    <property type="entry name" value="THIOLASE_2"/>
    <property type="match status" value="1"/>
</dbReference>
<dbReference type="PROSITE" id="PS00099">
    <property type="entry name" value="THIOLASE_3"/>
    <property type="match status" value="1"/>
</dbReference>
<name>THIKA_RAT</name>
<evidence type="ECO:0000250" key="1"/>
<evidence type="ECO:0000250" key="2">
    <source>
        <dbReference type="UniProtKB" id="P09110"/>
    </source>
</evidence>
<evidence type="ECO:0000250" key="3">
    <source>
        <dbReference type="UniProtKB" id="Q921H8"/>
    </source>
</evidence>
<evidence type="ECO:0000255" key="4">
    <source>
        <dbReference type="PROSITE-ProRule" id="PRU10020"/>
    </source>
</evidence>
<evidence type="ECO:0000269" key="5">
    <source>
    </source>
</evidence>
<evidence type="ECO:0000269" key="6">
    <source>
    </source>
</evidence>
<evidence type="ECO:0000269" key="7">
    <source>
    </source>
</evidence>
<evidence type="ECO:0000303" key="8">
    <source>
    </source>
</evidence>
<evidence type="ECO:0000303" key="9">
    <source>
    </source>
</evidence>
<evidence type="ECO:0000305" key="10"/>
<evidence type="ECO:0000305" key="11">
    <source>
    </source>
</evidence>
<evidence type="ECO:0000312" key="12">
    <source>
        <dbReference type="RGD" id="67379"/>
    </source>
</evidence>
<accession>P21775</accession>
<accession>Q5FVR9</accession>
<protein>
    <recommendedName>
        <fullName evidence="10">3-ketoacyl-CoA thiolase A, peroxisomal</fullName>
        <ecNumber evidence="7">2.3.1.16</ecNumber>
    </recommendedName>
    <alternativeName>
        <fullName>Acetyl-CoA C-myristoyltransferase</fullName>
        <ecNumber evidence="7">2.3.1.155</ecNumber>
    </alternativeName>
    <alternativeName>
        <fullName>Acetyl-CoA acyltransferase A</fullName>
        <ecNumber evidence="7">2.3.1.9</ecNumber>
    </alternativeName>
    <alternativeName>
        <fullName>Beta-ketothiolase A</fullName>
    </alternativeName>
    <alternativeName>
        <fullName>Peroxisomal 3-oxoacyl-CoA thiolase A</fullName>
    </alternativeName>
    <alternativeName>
        <fullName evidence="9">Thiolase A</fullName>
    </alternativeName>
</protein>
<organism>
    <name type="scientific">Rattus norvegicus</name>
    <name type="common">Rat</name>
    <dbReference type="NCBI Taxonomy" id="10116"/>
    <lineage>
        <taxon>Eukaryota</taxon>
        <taxon>Metazoa</taxon>
        <taxon>Chordata</taxon>
        <taxon>Craniata</taxon>
        <taxon>Vertebrata</taxon>
        <taxon>Euteleostomi</taxon>
        <taxon>Mammalia</taxon>
        <taxon>Eutheria</taxon>
        <taxon>Euarchontoglires</taxon>
        <taxon>Glires</taxon>
        <taxon>Rodentia</taxon>
        <taxon>Myomorpha</taxon>
        <taxon>Muroidea</taxon>
        <taxon>Muridae</taxon>
        <taxon>Murinae</taxon>
        <taxon>Rattus</taxon>
    </lineage>
</organism>
<reference key="1">
    <citation type="journal article" date="1990" name="Gene">
        <title>Cloning and sequence determination of cDNA encoding a second rat liver peroxisomal 3-ketoacyl-CoA thiolase.</title>
        <authorList>
            <person name="Bodnar A.G."/>
            <person name="Rachubinski R.A."/>
        </authorList>
    </citation>
    <scope>NUCLEOTIDE SEQUENCE [MRNA] (ISOFORM 1)</scope>
    <scope>INDUCTION</scope>
    <scope>SUBCELLULAR LOCATION</scope>
    <source>
        <strain>Sprague-Dawley</strain>
    </source>
</reference>
<reference key="2">
    <citation type="journal article" date="1990" name="J. Biol. Chem.">
        <title>Rat peroxisomal 3-ketoacyl-CoA thiolase gene. Occurrence of two closely related but differentially regulated genes.</title>
        <authorList>
            <person name="Hijikata M."/>
            <person name="Wen J.K."/>
            <person name="Osumi T."/>
            <person name="Hashimoto T."/>
        </authorList>
    </citation>
    <scope>NUCLEOTIDE SEQUENCE [GENOMIC DNA]</scope>
    <source>
        <strain>Sprague-Dawley</strain>
    </source>
</reference>
<reference key="3">
    <citation type="journal article" date="2004" name="Genome Res.">
        <title>The status, quality, and expansion of the NIH full-length cDNA project: the Mammalian Gene Collection (MGC).</title>
        <authorList>
            <consortium name="The MGC Project Team"/>
        </authorList>
    </citation>
    <scope>NUCLEOTIDE SEQUENCE [LARGE SCALE MRNA] (ISOFORM 2)</scope>
    <source>
        <tissue>Lung</tissue>
    </source>
</reference>
<reference key="4">
    <citation type="journal article" date="1997" name="J. Biol. Chem.">
        <title>Substrate specificities of 3-oxoacyl-CoA thiolase A and sterol carrier protein 2/3-oxoacyl-CoA thiolase purified from normal rat liver peroxisomes. Sterol carrier protein 2/3-oxoacyl-CoA thiolase is involved in the metabolism of 2-methyl-branched fatty acids and bile acid intermediates.</title>
        <authorList>
            <person name="Antonenkov V.D."/>
            <person name="Van Veldhoven P.P."/>
            <person name="Waelkens E."/>
            <person name="Mannaerts G.P."/>
        </authorList>
    </citation>
    <scope>PROTEIN SEQUENCE OF 40-57</scope>
    <scope>CATALYTIC ACTIVITY</scope>
    <scope>FUNCTION</scope>
    <scope>SUBCELLULAR LOCATION</scope>
    <scope>PATHWAY</scope>
    <scope>TISSUE SPECIFICITY</scope>
</reference>
<reference key="5">
    <citation type="journal article" date="1991" name="EMBO J.">
        <title>A novel, cleavable peroxisomal targeting signal at the amino-terminus of the rat 3-ketoacyl-CoA thiolase.</title>
        <authorList>
            <person name="Swinkels B.W."/>
            <person name="Gould S.J."/>
            <person name="Bodnar A.G."/>
            <person name="Rachubinski R.A."/>
            <person name="Subramani S."/>
        </authorList>
    </citation>
    <scope>TRANSIT PEPTIDE CLEAVAGE SITE</scope>
    <scope>DOMAIN</scope>
</reference>
<keyword id="KW-0007">Acetylation</keyword>
<keyword id="KW-0012">Acyltransferase</keyword>
<keyword id="KW-0025">Alternative splicing</keyword>
<keyword id="KW-0903">Direct protein sequencing</keyword>
<keyword id="KW-0276">Fatty acid metabolism</keyword>
<keyword id="KW-0443">Lipid metabolism</keyword>
<keyword id="KW-0576">Peroxisome</keyword>
<keyword id="KW-1185">Reference proteome</keyword>
<keyword id="KW-0808">Transferase</keyword>
<keyword id="KW-0809">Transit peptide</keyword>
<comment type="function">
    <text evidence="7">Responsible for the thiolytic cleavage of straight chain 3-keto fatty acyl-CoAs (3-oxoacyl-CoAs) (PubMed:9325339). Plays an important role in fatty acid peroxisomal beta-oxidation (PubMed:9325339). Catalyzes the cleavage of short, medium, long, and very long straight chain 3-oxoacyl-CoAs (PubMed:9325339). Medium chain straight 3-oxoacyl-CoAs are preferred substrates (PubMed:9325339).</text>
</comment>
<comment type="catalytic activity">
    <reaction evidence="7">
        <text>an acyl-CoA + acetyl-CoA = a 3-oxoacyl-CoA + CoA</text>
        <dbReference type="Rhea" id="RHEA:21564"/>
        <dbReference type="ChEBI" id="CHEBI:57287"/>
        <dbReference type="ChEBI" id="CHEBI:57288"/>
        <dbReference type="ChEBI" id="CHEBI:58342"/>
        <dbReference type="ChEBI" id="CHEBI:90726"/>
        <dbReference type="EC" id="2.3.1.16"/>
    </reaction>
    <physiologicalReaction direction="right-to-left" evidence="11">
        <dbReference type="Rhea" id="RHEA:21566"/>
    </physiologicalReaction>
</comment>
<comment type="catalytic activity">
    <reaction evidence="7">
        <text>2 acetyl-CoA = acetoacetyl-CoA + CoA</text>
        <dbReference type="Rhea" id="RHEA:21036"/>
        <dbReference type="ChEBI" id="CHEBI:57286"/>
        <dbReference type="ChEBI" id="CHEBI:57287"/>
        <dbReference type="ChEBI" id="CHEBI:57288"/>
        <dbReference type="EC" id="2.3.1.9"/>
    </reaction>
    <physiologicalReaction direction="right-to-left" evidence="11">
        <dbReference type="Rhea" id="RHEA:21038"/>
    </physiologicalReaction>
</comment>
<comment type="catalytic activity">
    <reaction evidence="7">
        <text>tetradecanoyl-CoA + acetyl-CoA = 3-oxohexadecanoyl-CoA + CoA</text>
        <dbReference type="Rhea" id="RHEA:18161"/>
        <dbReference type="ChEBI" id="CHEBI:57287"/>
        <dbReference type="ChEBI" id="CHEBI:57288"/>
        <dbReference type="ChEBI" id="CHEBI:57349"/>
        <dbReference type="ChEBI" id="CHEBI:57385"/>
        <dbReference type="EC" id="2.3.1.155"/>
    </reaction>
    <physiologicalReaction direction="right-to-left" evidence="11">
        <dbReference type="Rhea" id="RHEA:18163"/>
    </physiologicalReaction>
</comment>
<comment type="catalytic activity">
    <reaction evidence="7">
        <text>hexanoyl-CoA + acetyl-CoA = 3-oxooctanoyl-CoA + CoA</text>
        <dbReference type="Rhea" id="RHEA:31203"/>
        <dbReference type="ChEBI" id="CHEBI:57287"/>
        <dbReference type="ChEBI" id="CHEBI:57288"/>
        <dbReference type="ChEBI" id="CHEBI:62619"/>
        <dbReference type="ChEBI" id="CHEBI:62620"/>
    </reaction>
    <physiologicalReaction direction="right-to-left" evidence="11">
        <dbReference type="Rhea" id="RHEA:31205"/>
    </physiologicalReaction>
</comment>
<comment type="catalytic activity">
    <reaction evidence="7">
        <text>3-oxohexadecanedioyl-CoA + CoA = tetradecanedioyl-CoA + acetyl-CoA</text>
        <dbReference type="Rhea" id="RHEA:40343"/>
        <dbReference type="ChEBI" id="CHEBI:57287"/>
        <dbReference type="ChEBI" id="CHEBI:57288"/>
        <dbReference type="ChEBI" id="CHEBI:77081"/>
        <dbReference type="ChEBI" id="CHEBI:77084"/>
    </reaction>
    <physiologicalReaction direction="left-to-right" evidence="11">
        <dbReference type="Rhea" id="RHEA:40344"/>
    </physiologicalReaction>
</comment>
<comment type="catalytic activity">
    <reaction evidence="2">
        <text>3-oxo-(6Z,9Z,12Z,15Z,18Z,21Z)-tetracosahexaenoyl-CoA + CoA = (4Z,7Z,10Z,13Z,16Z,19Z)-docosahexaenoyl-CoA + acetyl-CoA</text>
        <dbReference type="Rhea" id="RHEA:39131"/>
        <dbReference type="ChEBI" id="CHEBI:57287"/>
        <dbReference type="ChEBI" id="CHEBI:57288"/>
        <dbReference type="ChEBI" id="CHEBI:74298"/>
        <dbReference type="ChEBI" id="CHEBI:74304"/>
    </reaction>
    <physiologicalReaction direction="left-to-right" evidence="2">
        <dbReference type="Rhea" id="RHEA:39132"/>
    </physiologicalReaction>
</comment>
<comment type="biophysicochemical properties">
    <kinetics>
        <KM evidence="7">7.7 uM for acetoacetyl-CoA</KM>
        <KM evidence="7">9.1 uM for 3-oxooctanoyl-CoA</KM>
        <KM evidence="7">7.8 uM for 3-oxohexadecanoyl-CoA</KM>
        <KM evidence="7">3.4 uM for 3-oxohexadecanedioyl-CoA</KM>
        <Vmax evidence="7">26.8 umol/min/mg enzyme towards acetoacetyl-CoA</Vmax>
        <Vmax evidence="7">145.0 umol/min/mg enzyme towards 3-oxooctanoyl-CoA</Vmax>
        <Vmax evidence="7">14.3 umol/min/mg enzyme towards 3-oxohexadecanoyl-CoA</Vmax>
        <Vmax evidence="7">128.0 umol/min/mg enzyme towards 3-oxohexadecanedioyl-CoA</Vmax>
    </kinetics>
    <phDependence>
        <text evidence="7">Optimum pH is 8 with acetoacetyl-CoA and 3-oxooctanoyl-CoA as substrates.</text>
    </phDependence>
</comment>
<comment type="pathway">
    <text evidence="7">Lipid metabolism; peroxisomal fatty acid beta-oxidation.</text>
</comment>
<comment type="subunit">
    <text evidence="2">Homodimer. Interacts (via PTS2-type peroxisomal targeting signal region) with PEX7; leading to its translocation into peroxisomes.</text>
</comment>
<comment type="subcellular location">
    <subcellularLocation>
        <location evidence="5 6 7">Peroxisome</location>
    </subcellularLocation>
    <text evidence="2">Transported into peroxisomes following association with PEX7.</text>
</comment>
<comment type="alternative products">
    <event type="alternative splicing"/>
    <isoform>
        <id>P21775-1</id>
        <name>1</name>
        <sequence type="displayed"/>
    </isoform>
    <isoform>
        <id>P21775-2</id>
        <name>2</name>
        <sequence type="described" ref="VSP_023746"/>
    </isoform>
</comment>
<comment type="induction">
    <text evidence="6">Peroxisomal thiolase is markedly induced (at the level of transcription) by various hypolipidemic compounds in parallel with the other two enzymes of the peroxisomal beta-oxidation system.</text>
</comment>
<comment type="domain">
    <text evidence="5">The PTS2-type peroxisomal targeting signal, which mediates interaction with PEX7 and localization to peroxisomes, is cleaved following import into peroxisomes.</text>
</comment>
<comment type="similarity">
    <text evidence="10">Belongs to the thiolase-like superfamily. Thiolase family.</text>
</comment>
<feature type="transit peptide" description="Peroxisome" evidence="5">
    <location>
        <begin position="1"/>
        <end position="36"/>
    </location>
</feature>
<feature type="chain" id="PRO_0000034070" description="3-ketoacyl-CoA thiolase A, peroxisomal">
    <location>
        <begin position="37"/>
        <end position="434"/>
    </location>
</feature>
<feature type="region of interest" description="PTS2-type peroxisomal targeting signal" evidence="5">
    <location>
        <begin position="11"/>
        <end position="36"/>
    </location>
</feature>
<feature type="active site" description="Acyl-thioester intermediate" evidence="1">
    <location>
        <position position="133"/>
    </location>
</feature>
<feature type="active site" description="Proton acceptor" evidence="4">
    <location>
        <position position="387"/>
    </location>
</feature>
<feature type="active site" description="Proton acceptor" evidence="4">
    <location>
        <position position="418"/>
    </location>
</feature>
<feature type="modified residue" description="N6-acetyllysine" evidence="3">
    <location>
        <position position="183"/>
    </location>
</feature>
<feature type="modified residue" description="N6-acetyllysine" evidence="3">
    <location>
        <position position="244"/>
    </location>
</feature>
<feature type="splice variant" id="VSP_023746" description="In isoform 2." evidence="8">
    <original>LTVNDIDIFEINEAFASQALYCVEKLGIPAEKVNPLGGAIALGHPLGCTGARQVVTLLNELKRRGRRAYGVVSMCIGTGMGAAAVFEYPGN</original>
    <variation>PLLCGEAGNSCREGEPPGGCNSPGPPPGLHRSKAGGHAAQ</variation>
    <location>
        <begin position="344"/>
        <end position="434"/>
    </location>
</feature>
<feature type="sequence conflict" description="In Ref. 3; AAH89821." evidence="10" ref="3">
    <original>T</original>
    <variation>S</variation>
    <location>
        <position position="39"/>
    </location>
</feature>
<feature type="sequence conflict" description="In Ref. 3; AAH89821." evidence="10" ref="3">
    <original>G</original>
    <variation>S</variation>
    <location>
        <position position="245"/>
    </location>
</feature>
<feature type="sequence conflict" description="In Ref. 1; AAA41471." evidence="10" ref="1">
    <original>R</original>
    <variation>T</variation>
    <location>
        <position position="409"/>
    </location>
</feature>
<proteinExistence type="evidence at protein level"/>
<sequence length="434" mass="44839">MSESVGRTSAMHRLQVVLGHLAGRPESSSALQAAPCSATFPQASASDVVVVHGRRTPIGRAGRGGFKDTTPDELLSAVLTAVLQDVKLKPECLGDISVGNVLEPGAGAVMARIAQFLSGIPETVPLSAVNRQCSSGLQAVANIAGGIRNGSYDIGMACGVESMSLSNRGNPGNISSRLLESDKARDCLIPMGITSENVAERFGISRQKQDAFALASQQKAASAQSKGCFRAEIVPVTTTVLDDKGDRKTITVSQDEGVRPSTTMEGLAKLKPAFKDGGSTTAGNSSQVSDGAAAVLLARRSKAEELGLPILGVLRSYAVVGVPPDIMGIGPAYAIPAALQKAGLTVNDIDIFEINEAFASQALYCVEKLGIPAEKVNPLGGAIALGHPLGCTGARQVVTLLNELKRRGRRAYGVVSMCIGTGMGAAAVFEYPGN</sequence>
<gene>
    <name evidence="12" type="primary">Acaa1a</name>
</gene>